<protein>
    <recommendedName>
        <fullName evidence="1">UPF0354 protein SAS1669</fullName>
    </recommendedName>
</protein>
<feature type="chain" id="PRO_0000171109" description="UPF0354 protein SAS1669">
    <location>
        <begin position="1"/>
        <end position="285"/>
    </location>
</feature>
<accession>Q6G8I4</accession>
<comment type="similarity">
    <text evidence="1">Belongs to the UPF0354 family.</text>
</comment>
<organism>
    <name type="scientific">Staphylococcus aureus (strain MSSA476)</name>
    <dbReference type="NCBI Taxonomy" id="282459"/>
    <lineage>
        <taxon>Bacteria</taxon>
        <taxon>Bacillati</taxon>
        <taxon>Bacillota</taxon>
        <taxon>Bacilli</taxon>
        <taxon>Bacillales</taxon>
        <taxon>Staphylococcaceae</taxon>
        <taxon>Staphylococcus</taxon>
    </lineage>
</organism>
<gene>
    <name type="ordered locus">SAS1669</name>
</gene>
<proteinExistence type="inferred from homology"/>
<evidence type="ECO:0000255" key="1">
    <source>
        <dbReference type="HAMAP-Rule" id="MF_01548"/>
    </source>
</evidence>
<name>Y1669_STAAS</name>
<dbReference type="EMBL" id="BX571857">
    <property type="protein sequence ID" value="CAG43472.1"/>
    <property type="molecule type" value="Genomic_DNA"/>
</dbReference>
<dbReference type="RefSeq" id="WP_001091387.1">
    <property type="nucleotide sequence ID" value="NC_002953.3"/>
</dbReference>
<dbReference type="KEGG" id="sas:SAS1669"/>
<dbReference type="HOGENOM" id="CLU_085634_0_0_9"/>
<dbReference type="HAMAP" id="MF_01548">
    <property type="entry name" value="UPF0354"/>
    <property type="match status" value="1"/>
</dbReference>
<dbReference type="InterPro" id="IPR010838">
    <property type="entry name" value="DUF1444"/>
</dbReference>
<dbReference type="NCBIfam" id="NF010189">
    <property type="entry name" value="PRK13668.1"/>
    <property type="match status" value="1"/>
</dbReference>
<dbReference type="Pfam" id="PF07285">
    <property type="entry name" value="DUF1444"/>
    <property type="match status" value="1"/>
</dbReference>
<dbReference type="PIRSF" id="PIRSF012562">
    <property type="entry name" value="UCP012562"/>
    <property type="match status" value="1"/>
</dbReference>
<sequence length="285" mass="33070">MNTFQMRDKLKERLSHLDVDFKFNREEETLRIYRTDNNKGITIKLNAIVAKYEDKKEKIVDEIVYYVDEAIAQMADKTLESISSSQIMPVIRATSFDKKTKQGVPFIYDEHTAETAVYYAVDLGKSYRLIDESMLEDLKLTEQQIREMSLFNVRKLSNSYTTDEVKGNIFYFINSNDGYDASRILNTAFLNEIEAQCQGEMLVAVPHQDVLIIADIRNKTGYDVMAHLTMEFFTKGLVPITSLSFGYKQGHLEPIFILGKNNKQKRDPNVIQRLEANRRKFNKDK</sequence>
<reference key="1">
    <citation type="journal article" date="2004" name="Proc. Natl. Acad. Sci. U.S.A.">
        <title>Complete genomes of two clinical Staphylococcus aureus strains: evidence for the rapid evolution of virulence and drug resistance.</title>
        <authorList>
            <person name="Holden M.T.G."/>
            <person name="Feil E.J."/>
            <person name="Lindsay J.A."/>
            <person name="Peacock S.J."/>
            <person name="Day N.P.J."/>
            <person name="Enright M.C."/>
            <person name="Foster T.J."/>
            <person name="Moore C.E."/>
            <person name="Hurst L."/>
            <person name="Atkin R."/>
            <person name="Barron A."/>
            <person name="Bason N."/>
            <person name="Bentley S.D."/>
            <person name="Chillingworth C."/>
            <person name="Chillingworth T."/>
            <person name="Churcher C."/>
            <person name="Clark L."/>
            <person name="Corton C."/>
            <person name="Cronin A."/>
            <person name="Doggett J."/>
            <person name="Dowd L."/>
            <person name="Feltwell T."/>
            <person name="Hance Z."/>
            <person name="Harris B."/>
            <person name="Hauser H."/>
            <person name="Holroyd S."/>
            <person name="Jagels K."/>
            <person name="James K.D."/>
            <person name="Lennard N."/>
            <person name="Line A."/>
            <person name="Mayes R."/>
            <person name="Moule S."/>
            <person name="Mungall K."/>
            <person name="Ormond D."/>
            <person name="Quail M.A."/>
            <person name="Rabbinowitsch E."/>
            <person name="Rutherford K.M."/>
            <person name="Sanders M."/>
            <person name="Sharp S."/>
            <person name="Simmonds M."/>
            <person name="Stevens K."/>
            <person name="Whitehead S."/>
            <person name="Barrell B.G."/>
            <person name="Spratt B.G."/>
            <person name="Parkhill J."/>
        </authorList>
    </citation>
    <scope>NUCLEOTIDE SEQUENCE [LARGE SCALE GENOMIC DNA]</scope>
    <source>
        <strain>MSSA476</strain>
    </source>
</reference>